<feature type="chain" id="PRO_0000080510" description="CDK5 and ABL1 enzyme substrate 1">
    <location>
        <begin position="1"/>
        <end position="633"/>
    </location>
</feature>
<feature type="region of interest" description="Interaction with TDRD7" evidence="1">
    <location>
        <begin position="1"/>
        <end position="109"/>
    </location>
</feature>
<feature type="region of interest" description="Disordered" evidence="3">
    <location>
        <begin position="1"/>
        <end position="99"/>
    </location>
</feature>
<feature type="region of interest" description="Interaction with CDK3" evidence="1">
    <location>
        <begin position="179"/>
        <end position="492"/>
    </location>
</feature>
<feature type="compositionally biased region" description="Low complexity" evidence="3">
    <location>
        <begin position="1"/>
        <end position="29"/>
    </location>
</feature>
<feature type="compositionally biased region" description="Basic and acidic residues" evidence="3">
    <location>
        <begin position="51"/>
        <end position="61"/>
    </location>
</feature>
<feature type="modified residue" description="Phosphoserine" evidence="10 11 12">
    <location>
        <position position="168"/>
    </location>
</feature>
<feature type="modified residue" description="Phosphoserine" evidence="10 11">
    <location>
        <position position="287"/>
    </location>
</feature>
<feature type="modified residue" description="Phosphoserine; by CDK2 and CDK3" evidence="2">
    <location>
        <position position="313"/>
    </location>
</feature>
<feature type="modified residue" description="Phosphothreonine" evidence="9 10 11">
    <location>
        <position position="415"/>
    </location>
</feature>
<feature type="splice variant" id="VSP_012695" description="In isoform 3." evidence="6">
    <location>
        <begin position="1"/>
        <end position="497"/>
    </location>
</feature>
<feature type="splice variant" id="VSP_045014" description="In isoform 4." evidence="6">
    <location>
        <begin position="1"/>
        <end position="327"/>
    </location>
</feature>
<feature type="splice variant" id="VSP_012696" description="In isoform 2." evidence="7">
    <location>
        <begin position="1"/>
        <end position="265"/>
    </location>
</feature>
<feature type="splice variant" id="VSP_012697" description="In isoform 2." evidence="7">
    <original>PGQGGSTSAFEQLQRSR</original>
    <variation>MLSKRGCHARIYADFPI</variation>
    <location>
        <begin position="266"/>
        <end position="282"/>
    </location>
</feature>
<feature type="sequence conflict" description="In Ref. 4; AAL83906." evidence="8" ref="4">
    <original>R</original>
    <variation>W</variation>
    <location>
        <position position="412"/>
    </location>
</feature>
<name>CABL1_HUMAN</name>
<proteinExistence type="evidence at protein level"/>
<comment type="function">
    <text evidence="1">Cyclin-dependent kinase binding protein. Enhances cyclin-dependent kinase tyrosine phosphorylation by nonreceptor tyrosine kinases, such as that of CDK5 by activated ABL1, which leads to increased CDK5 activity and is critical for neuronal development, and that of CDK2 by WEE1, which leads to decreased CDK2 activity and growth inhibition. Positively affects neuronal outgrowth. Plays a role as a regulator for p53/p73-induced cell death (By similarity).</text>
</comment>
<comment type="subunit">
    <text evidence="1">Found in a complex with p53/TP53. Found in a number of complexes with CDK2, CDK3, CDK5, ABL1, TDRD7, CDK17, CCNA1, CCNE1 and TP73. Interacts with CDK2, CDK3, CDK5, ABL1 and TDRD7 (By similarity).</text>
</comment>
<comment type="interaction">
    <interactant intactId="EBI-604615">
        <id>Q8TDN4</id>
    </interactant>
    <interactant intactId="EBI-1041567">
        <id>Q00535</id>
        <label>CDK5</label>
    </interactant>
    <organismsDiffer>false</organismsDiffer>
    <experiments>8</experiments>
</comment>
<comment type="interaction">
    <interactant intactId="EBI-604615">
        <id>Q8TDN4</id>
    </interactant>
    <interactant intactId="EBI-2400586">
        <id>Q9H3D4-1</id>
        <label>TP63</label>
    </interactant>
    <organismsDiffer>false</organismsDiffer>
    <experiments>7</experiments>
</comment>
<comment type="subcellular location">
    <subcellularLocation>
        <location evidence="1">Nucleus</location>
    </subcellularLocation>
    <subcellularLocation>
        <location evidence="1">Cytoplasm</location>
    </subcellularLocation>
    <text evidence="1">Located in the cell body and proximal region of the developing axonal shaft of immature neurons. Located in axonal growth cone, but not in the distal part of the axon shaft or in dendritic growth cone of mature neurons (By similarity).</text>
</comment>
<comment type="alternative products">
    <event type="alternative splicing"/>
    <isoform>
        <id>Q8TDN4-1</id>
        <name>1</name>
        <sequence type="displayed"/>
    </isoform>
    <isoform>
        <id>Q8TDN4-2</id>
        <name>2</name>
        <sequence type="described" ref="VSP_012696 VSP_012697"/>
    </isoform>
    <isoform>
        <id>Q8TDN4-3</id>
        <name>3</name>
        <sequence type="described" ref="VSP_012695"/>
    </isoform>
    <isoform>
        <id>Q8TDN4-4</id>
        <name>4</name>
        <sequence type="described" ref="VSP_045014"/>
    </isoform>
</comment>
<comment type="tissue specificity">
    <text evidence="4 5">Expressed in breast, pancreas, colon, head and neck (at protein level). Strongly decreased in more than half of cases of atypical endometrial hyperplasia and in more than 90% of endometrial cancers.</text>
</comment>
<comment type="developmental stage">
    <text evidence="5">Expression in the endometrial epithelium fluctuates during the menstrual cycle, being greater during the secretory phase when compared with the proliferative phase.</text>
</comment>
<comment type="induction">
    <text evidence="5">Up-regulated by progesterone and down-regulated by estrogen in benign endometrium.</text>
</comment>
<comment type="PTM">
    <text evidence="1">Phosphorylated on Ser-313 by CCNE1/CDK3. Phosphorylated on serine/threonine residues by CDK5 and on tyrosine residues by ABL1. Also phosphorylated in vitro by CCNA1/CDK2, CCNE1/CDK2, CCNA1/CDK3 and CCNE1/CDK3 (By similarity).</text>
</comment>
<comment type="similarity">
    <text evidence="8">Belongs to the cyclin family.</text>
</comment>
<keyword id="KW-0025">Alternative splicing</keyword>
<keyword id="KW-0131">Cell cycle</keyword>
<keyword id="KW-0132">Cell division</keyword>
<keyword id="KW-0195">Cyclin</keyword>
<keyword id="KW-0963">Cytoplasm</keyword>
<keyword id="KW-0539">Nucleus</keyword>
<keyword id="KW-0597">Phosphoprotein</keyword>
<keyword id="KW-1267">Proteomics identification</keyword>
<keyword id="KW-1185">Reference proteome</keyword>
<accession>Q8TDN4</accession>
<accession>B4DK60</accession>
<accession>Q8N3Y8</accession>
<accession>Q8NA22</accession>
<accession>Q9BTG1</accession>
<reference key="1">
    <citation type="journal article" date="2004" name="Nat. Genet.">
        <title>Complete sequencing and characterization of 21,243 full-length human cDNAs.</title>
        <authorList>
            <person name="Ota T."/>
            <person name="Suzuki Y."/>
            <person name="Nishikawa T."/>
            <person name="Otsuki T."/>
            <person name="Sugiyama T."/>
            <person name="Irie R."/>
            <person name="Wakamatsu A."/>
            <person name="Hayashi K."/>
            <person name="Sato H."/>
            <person name="Nagai K."/>
            <person name="Kimura K."/>
            <person name="Makita H."/>
            <person name="Sekine M."/>
            <person name="Obayashi M."/>
            <person name="Nishi T."/>
            <person name="Shibahara T."/>
            <person name="Tanaka T."/>
            <person name="Ishii S."/>
            <person name="Yamamoto J."/>
            <person name="Saito K."/>
            <person name="Kawai Y."/>
            <person name="Isono Y."/>
            <person name="Nakamura Y."/>
            <person name="Nagahari K."/>
            <person name="Murakami K."/>
            <person name="Yasuda T."/>
            <person name="Iwayanagi T."/>
            <person name="Wagatsuma M."/>
            <person name="Shiratori A."/>
            <person name="Sudo H."/>
            <person name="Hosoiri T."/>
            <person name="Kaku Y."/>
            <person name="Kodaira H."/>
            <person name="Kondo H."/>
            <person name="Sugawara M."/>
            <person name="Takahashi M."/>
            <person name="Kanda K."/>
            <person name="Yokoi T."/>
            <person name="Furuya T."/>
            <person name="Kikkawa E."/>
            <person name="Omura Y."/>
            <person name="Abe K."/>
            <person name="Kamihara K."/>
            <person name="Katsuta N."/>
            <person name="Sato K."/>
            <person name="Tanikawa M."/>
            <person name="Yamazaki M."/>
            <person name="Ninomiya K."/>
            <person name="Ishibashi T."/>
            <person name="Yamashita H."/>
            <person name="Murakawa K."/>
            <person name="Fujimori K."/>
            <person name="Tanai H."/>
            <person name="Kimata M."/>
            <person name="Watanabe M."/>
            <person name="Hiraoka S."/>
            <person name="Chiba Y."/>
            <person name="Ishida S."/>
            <person name="Ono Y."/>
            <person name="Takiguchi S."/>
            <person name="Watanabe S."/>
            <person name="Yosida M."/>
            <person name="Hotuta T."/>
            <person name="Kusano J."/>
            <person name="Kanehori K."/>
            <person name="Takahashi-Fujii A."/>
            <person name="Hara H."/>
            <person name="Tanase T.-O."/>
            <person name="Nomura Y."/>
            <person name="Togiya S."/>
            <person name="Komai F."/>
            <person name="Hara R."/>
            <person name="Takeuchi K."/>
            <person name="Arita M."/>
            <person name="Imose N."/>
            <person name="Musashino K."/>
            <person name="Yuuki H."/>
            <person name="Oshima A."/>
            <person name="Sasaki N."/>
            <person name="Aotsuka S."/>
            <person name="Yoshikawa Y."/>
            <person name="Matsunawa H."/>
            <person name="Ichihara T."/>
            <person name="Shiohata N."/>
            <person name="Sano S."/>
            <person name="Moriya S."/>
            <person name="Momiyama H."/>
            <person name="Satoh N."/>
            <person name="Takami S."/>
            <person name="Terashima Y."/>
            <person name="Suzuki O."/>
            <person name="Nakagawa S."/>
            <person name="Senoh A."/>
            <person name="Mizoguchi H."/>
            <person name="Goto Y."/>
            <person name="Shimizu F."/>
            <person name="Wakebe H."/>
            <person name="Hishigaki H."/>
            <person name="Watanabe T."/>
            <person name="Sugiyama A."/>
            <person name="Takemoto M."/>
            <person name="Kawakami B."/>
            <person name="Yamazaki M."/>
            <person name="Watanabe K."/>
            <person name="Kumagai A."/>
            <person name="Itakura S."/>
            <person name="Fukuzumi Y."/>
            <person name="Fujimori Y."/>
            <person name="Komiyama M."/>
            <person name="Tashiro H."/>
            <person name="Tanigami A."/>
            <person name="Fujiwara T."/>
            <person name="Ono T."/>
            <person name="Yamada K."/>
            <person name="Fujii Y."/>
            <person name="Ozaki K."/>
            <person name="Hirao M."/>
            <person name="Ohmori Y."/>
            <person name="Kawabata A."/>
            <person name="Hikiji T."/>
            <person name="Kobatake N."/>
            <person name="Inagaki H."/>
            <person name="Ikema Y."/>
            <person name="Okamoto S."/>
            <person name="Okitani R."/>
            <person name="Kawakami T."/>
            <person name="Noguchi S."/>
            <person name="Itoh T."/>
            <person name="Shigeta K."/>
            <person name="Senba T."/>
            <person name="Matsumura K."/>
            <person name="Nakajima Y."/>
            <person name="Mizuno T."/>
            <person name="Morinaga M."/>
            <person name="Sasaki M."/>
            <person name="Togashi T."/>
            <person name="Oyama M."/>
            <person name="Hata H."/>
            <person name="Watanabe M."/>
            <person name="Komatsu T."/>
            <person name="Mizushima-Sugano J."/>
            <person name="Satoh T."/>
            <person name="Shirai Y."/>
            <person name="Takahashi Y."/>
            <person name="Nakagawa K."/>
            <person name="Okumura K."/>
            <person name="Nagase T."/>
            <person name="Nomura N."/>
            <person name="Kikuchi H."/>
            <person name="Masuho Y."/>
            <person name="Yamashita R."/>
            <person name="Nakai K."/>
            <person name="Yada T."/>
            <person name="Nakamura Y."/>
            <person name="Ohara O."/>
            <person name="Isogai T."/>
            <person name="Sugano S."/>
        </authorList>
    </citation>
    <scope>NUCLEOTIDE SEQUENCE [LARGE SCALE MRNA] (ISOFORMS 3 AND 4)</scope>
    <source>
        <tissue>Testis</tissue>
        <tissue>Thalamus</tissue>
    </source>
</reference>
<reference key="2">
    <citation type="journal article" date="2005" name="Nature">
        <title>DNA sequence and analysis of human chromosome 18.</title>
        <authorList>
            <person name="Nusbaum C."/>
            <person name="Zody M.C."/>
            <person name="Borowsky M.L."/>
            <person name="Kamal M."/>
            <person name="Kodira C.D."/>
            <person name="Taylor T.D."/>
            <person name="Whittaker C.A."/>
            <person name="Chang J.L."/>
            <person name="Cuomo C.A."/>
            <person name="Dewar K."/>
            <person name="FitzGerald M.G."/>
            <person name="Yang X."/>
            <person name="Abouelleil A."/>
            <person name="Allen N.R."/>
            <person name="Anderson S."/>
            <person name="Bloom T."/>
            <person name="Bugalter B."/>
            <person name="Butler J."/>
            <person name="Cook A."/>
            <person name="DeCaprio D."/>
            <person name="Engels R."/>
            <person name="Garber M."/>
            <person name="Gnirke A."/>
            <person name="Hafez N."/>
            <person name="Hall J.L."/>
            <person name="Norman C.H."/>
            <person name="Itoh T."/>
            <person name="Jaffe D.B."/>
            <person name="Kuroki Y."/>
            <person name="Lehoczky J."/>
            <person name="Lui A."/>
            <person name="Macdonald P."/>
            <person name="Mauceli E."/>
            <person name="Mikkelsen T.S."/>
            <person name="Naylor J.W."/>
            <person name="Nicol R."/>
            <person name="Nguyen C."/>
            <person name="Noguchi H."/>
            <person name="O'Leary S.B."/>
            <person name="Piqani B."/>
            <person name="Smith C.L."/>
            <person name="Talamas J.A."/>
            <person name="Topham K."/>
            <person name="Totoki Y."/>
            <person name="Toyoda A."/>
            <person name="Wain H.M."/>
            <person name="Young S.K."/>
            <person name="Zeng Q."/>
            <person name="Zimmer A.R."/>
            <person name="Fujiyama A."/>
            <person name="Hattori M."/>
            <person name="Birren B.W."/>
            <person name="Sakaki Y."/>
            <person name="Lander E.S."/>
        </authorList>
    </citation>
    <scope>NUCLEOTIDE SEQUENCE [LARGE SCALE GENOMIC DNA]</scope>
</reference>
<reference key="3">
    <citation type="journal article" date="2004" name="Genome Res.">
        <title>The status, quality, and expansion of the NIH full-length cDNA project: the Mammalian Gene Collection (MGC).</title>
        <authorList>
            <consortium name="The MGC Project Team"/>
        </authorList>
    </citation>
    <scope>NUCLEOTIDE SEQUENCE [LARGE SCALE MRNA] (ISOFORM 2)</scope>
    <source>
        <tissue>Brain</tissue>
        <tissue>Lung</tissue>
    </source>
</reference>
<reference key="4">
    <citation type="journal article" date="2001" name="Cancer Res.">
        <title>Cables enhances cdk2 tyrosine 15 phosphorylation by Wee1, inhibits cell growth, and is lost in many human colon and squamous cancers.</title>
        <authorList>
            <person name="Wu C.-L."/>
            <person name="Kirley S.D."/>
            <person name="Xiao H."/>
            <person name="Chuang Y."/>
            <person name="Chung D.C."/>
            <person name="Zukerberg L.R."/>
        </authorList>
    </citation>
    <scope>NUCLEOTIDE SEQUENCE [MRNA] OF 201-633 (ISOFORM 1)</scope>
    <scope>TISSUE SPECIFICITY</scope>
    <scope>SUBCELLULAR LOCATION</scope>
    <scope>INVOLVEMENT IN CANCER</scope>
    <source>
        <tissue>Brain</tissue>
    </source>
</reference>
<reference key="5">
    <citation type="journal article" date="2002" name="J. Biol. Chem.">
        <title>Differential effect of ik3-1/cables on p53- and p73-induced cell death.</title>
        <authorList>
            <person name="Tsuji K."/>
            <person name="Mizumoto K."/>
            <person name="Yamochi T."/>
            <person name="Nishimoto I."/>
            <person name="Matsuoka M."/>
        </authorList>
    </citation>
    <scope>SUBCELLULAR LOCATION</scope>
    <scope>IDENTIFICATION IN A COMPLEX WITH TP53</scope>
</reference>
<reference key="6">
    <citation type="journal article" date="2004" name="Cancer Res.">
        <title>Loss of cables, a cyclin-dependent kinase regulatory protein, is associated with the development of endometrial hyperplasia and endometrial cancer.</title>
        <authorList>
            <person name="Zukerberg L.R."/>
            <person name="DeBernardo R.L."/>
            <person name="Kirley S.D."/>
            <person name="D'Apuzzo M."/>
            <person name="Lynch M.P."/>
            <person name="Littell R.D."/>
            <person name="Duska L.R."/>
            <person name="Boring L."/>
            <person name="Rueda B.R."/>
        </authorList>
    </citation>
    <scope>DEVELOPMENTAL STAGE</scope>
    <scope>TISSUE SPECIFICITY</scope>
    <scope>INDUCTION</scope>
</reference>
<reference key="7">
    <citation type="journal article" date="2008" name="J. Proteome Res.">
        <title>Combining protein-based IMAC, peptide-based IMAC, and MudPIT for efficient phosphoproteomic analysis.</title>
        <authorList>
            <person name="Cantin G.T."/>
            <person name="Yi W."/>
            <person name="Lu B."/>
            <person name="Park S.K."/>
            <person name="Xu T."/>
            <person name="Lee J.-D."/>
            <person name="Yates J.R. III"/>
        </authorList>
    </citation>
    <scope>PHOSPHORYLATION [LARGE SCALE ANALYSIS] AT THR-415</scope>
    <scope>IDENTIFICATION BY MASS SPECTROMETRY [LARGE SCALE ANALYSIS]</scope>
    <source>
        <tissue>Cervix carcinoma</tissue>
    </source>
</reference>
<reference key="8">
    <citation type="journal article" date="2008" name="Mol. Cell">
        <title>Kinase-selective enrichment enables quantitative phosphoproteomics of the kinome across the cell cycle.</title>
        <authorList>
            <person name="Daub H."/>
            <person name="Olsen J.V."/>
            <person name="Bairlein M."/>
            <person name="Gnad F."/>
            <person name="Oppermann F.S."/>
            <person name="Korner R."/>
            <person name="Greff Z."/>
            <person name="Keri G."/>
            <person name="Stemmann O."/>
            <person name="Mann M."/>
        </authorList>
    </citation>
    <scope>PHOSPHORYLATION [LARGE SCALE ANALYSIS] AT SER-168; SER-287 AND THR-415</scope>
    <scope>IDENTIFICATION BY MASS SPECTROMETRY [LARGE SCALE ANALYSIS]</scope>
    <source>
        <tissue>Cervix carcinoma</tissue>
    </source>
</reference>
<reference key="9">
    <citation type="journal article" date="2008" name="Proc. Natl. Acad. Sci. U.S.A.">
        <title>A quantitative atlas of mitotic phosphorylation.</title>
        <authorList>
            <person name="Dephoure N."/>
            <person name="Zhou C."/>
            <person name="Villen J."/>
            <person name="Beausoleil S.A."/>
            <person name="Bakalarski C.E."/>
            <person name="Elledge S.J."/>
            <person name="Gygi S.P."/>
        </authorList>
    </citation>
    <scope>IDENTIFICATION BY MASS SPECTROMETRY [LARGE SCALE ANALYSIS]</scope>
    <source>
        <tissue>Cervix carcinoma</tissue>
    </source>
</reference>
<reference key="10">
    <citation type="journal article" date="2009" name="Anal. Chem.">
        <title>Lys-N and trypsin cover complementary parts of the phosphoproteome in a refined SCX-based approach.</title>
        <authorList>
            <person name="Gauci S."/>
            <person name="Helbig A.O."/>
            <person name="Slijper M."/>
            <person name="Krijgsveld J."/>
            <person name="Heck A.J."/>
            <person name="Mohammed S."/>
        </authorList>
    </citation>
    <scope>IDENTIFICATION BY MASS SPECTROMETRY [LARGE SCALE ANALYSIS]</scope>
</reference>
<reference key="11">
    <citation type="journal article" date="2009" name="Mol. Cell. Proteomics">
        <title>Large-scale proteomics analysis of the human kinome.</title>
        <authorList>
            <person name="Oppermann F.S."/>
            <person name="Gnad F."/>
            <person name="Olsen J.V."/>
            <person name="Hornberger R."/>
            <person name="Greff Z."/>
            <person name="Keri G."/>
            <person name="Mann M."/>
            <person name="Daub H."/>
        </authorList>
    </citation>
    <scope>PHOSPHORYLATION [LARGE SCALE ANALYSIS] AT SER-168; SER-287 AND THR-415</scope>
    <scope>IDENTIFICATION BY MASS SPECTROMETRY [LARGE SCALE ANALYSIS]</scope>
</reference>
<reference key="12">
    <citation type="journal article" date="2013" name="J. Proteome Res.">
        <title>Toward a comprehensive characterization of a human cancer cell phosphoproteome.</title>
        <authorList>
            <person name="Zhou H."/>
            <person name="Di Palma S."/>
            <person name="Preisinger C."/>
            <person name="Peng M."/>
            <person name="Polat A.N."/>
            <person name="Heck A.J."/>
            <person name="Mohammed S."/>
        </authorList>
    </citation>
    <scope>PHOSPHORYLATION [LARGE SCALE ANALYSIS] AT SER-168</scope>
    <scope>IDENTIFICATION BY MASS SPECTROMETRY [LARGE SCALE ANALYSIS]</scope>
    <source>
        <tissue>Cervix carcinoma</tissue>
    </source>
</reference>
<protein>
    <recommendedName>
        <fullName>CDK5 and ABL1 enzyme substrate 1</fullName>
    </recommendedName>
    <alternativeName>
        <fullName>Interactor with CDK3 1</fullName>
        <shortName>Ik3-1</shortName>
    </alternativeName>
</protein>
<evidence type="ECO:0000250" key="1"/>
<evidence type="ECO:0000250" key="2">
    <source>
        <dbReference type="UniProtKB" id="Q9ESJ1"/>
    </source>
</evidence>
<evidence type="ECO:0000256" key="3">
    <source>
        <dbReference type="SAM" id="MobiDB-lite"/>
    </source>
</evidence>
<evidence type="ECO:0000269" key="4">
    <source>
    </source>
</evidence>
<evidence type="ECO:0000269" key="5">
    <source>
    </source>
</evidence>
<evidence type="ECO:0000303" key="6">
    <source>
    </source>
</evidence>
<evidence type="ECO:0000303" key="7">
    <source>
    </source>
</evidence>
<evidence type="ECO:0000305" key="8"/>
<evidence type="ECO:0007744" key="9">
    <source>
    </source>
</evidence>
<evidence type="ECO:0007744" key="10">
    <source>
    </source>
</evidence>
<evidence type="ECO:0007744" key="11">
    <source>
    </source>
</evidence>
<evidence type="ECO:0007744" key="12">
    <source>
    </source>
</evidence>
<organism>
    <name type="scientific">Homo sapiens</name>
    <name type="common">Human</name>
    <dbReference type="NCBI Taxonomy" id="9606"/>
    <lineage>
        <taxon>Eukaryota</taxon>
        <taxon>Metazoa</taxon>
        <taxon>Chordata</taxon>
        <taxon>Craniata</taxon>
        <taxon>Vertebrata</taxon>
        <taxon>Euteleostomi</taxon>
        <taxon>Mammalia</taxon>
        <taxon>Eutheria</taxon>
        <taxon>Euarchontoglires</taxon>
        <taxon>Primates</taxon>
        <taxon>Haplorrhini</taxon>
        <taxon>Catarrhini</taxon>
        <taxon>Hominidae</taxon>
        <taxon>Homo</taxon>
    </lineage>
</organism>
<sequence>MAAAAAAATTAACSSGSAGTDAAGASGLQQPPPQPQPQPAAAAPAQPPPEPPRKPRMDPRRRQAALSFLTNISLDGRLPPQDAEWGGGEEGGAAKPGAGGACGARTRFSLLAAAERGGCIALAAPGTPAAGLAAGSGPCLPQPSSLPPLIPGGHATVSGPGVARGFASPLGAGRASGEQWQPPRPAPLAACAQLQLLDGSGAAGQEELEEDDAFISVQVPAAAFLGSGTPGSGSGSRGRLNSFTQGILPIAFSRPTSQNYCSLEQPGQGGSTSAFEQLQRSRRRLISQRSSLETLEDIEENAPLRRCRTLSGSPRPKNFKKIHFIKNMRQHDTRNGRIVLISGRRSFCSIFSVLPYRDSTQVGDLKLDGGRQSTGAVSLKEIIGLEGVELGADGKTVSYTQFLLPTNAFGARRNTIDSTSSFSQFRNLSHRSLSIGRASGTQGSLDTGSDLGDFMDYDPNLLDDPQWPCGKHKRVLIFPSYMTTVIDYVKPSDLKKDMNETFKEKFPHIKLTLSKIRSLKREMRKLAQEDCGLEEPTVAMAFVYFEKLALKGKLNKQNRKLCAGACVLLAAKIGSDLKKHEVKHLIDKLEEKFRLNRRELIAFEFPVLVALEFALHLPEHEVMPHYRRLVQSS</sequence>
<gene>
    <name type="primary">CABLES1</name>
    <name type="synonym">CABLES</name>
</gene>
<dbReference type="EMBL" id="AK093243">
    <property type="protein sequence ID" value="BAC04107.1"/>
    <property type="molecule type" value="mRNA"/>
</dbReference>
<dbReference type="EMBL" id="AK296407">
    <property type="protein sequence ID" value="BAG59072.1"/>
    <property type="molecule type" value="mRNA"/>
</dbReference>
<dbReference type="EMBL" id="AC105247">
    <property type="status" value="NOT_ANNOTATED_CDS"/>
    <property type="molecule type" value="Genomic_DNA"/>
</dbReference>
<dbReference type="EMBL" id="AC011731">
    <property type="status" value="NOT_ANNOTATED_CDS"/>
    <property type="molecule type" value="Genomic_DNA"/>
</dbReference>
<dbReference type="EMBL" id="BC004124">
    <property type="protein sequence ID" value="AAH04124.2"/>
    <property type="molecule type" value="mRNA"/>
</dbReference>
<dbReference type="EMBL" id="BC037218">
    <property type="protein sequence ID" value="AAH37218.1"/>
    <property type="molecule type" value="mRNA"/>
</dbReference>
<dbReference type="EMBL" id="AF348525">
    <property type="protein sequence ID" value="AAL83906.1"/>
    <property type="molecule type" value="mRNA"/>
</dbReference>
<dbReference type="CCDS" id="CCDS42417.1">
    <molecule id="Q8TDN4-1"/>
</dbReference>
<dbReference type="CCDS" id="CCDS42418.1">
    <molecule id="Q8TDN4-2"/>
</dbReference>
<dbReference type="CCDS" id="CCDS58615.1">
    <molecule id="Q8TDN4-4"/>
</dbReference>
<dbReference type="RefSeq" id="NP_001094089.1">
    <molecule id="Q8TDN4-1"/>
    <property type="nucleotide sequence ID" value="NM_001100619.3"/>
</dbReference>
<dbReference type="RefSeq" id="NP_001243367.1">
    <molecule id="Q8TDN4-4"/>
    <property type="nucleotide sequence ID" value="NM_001256438.1"/>
</dbReference>
<dbReference type="RefSeq" id="NP_612384.1">
    <molecule id="Q8TDN4-2"/>
    <property type="nucleotide sequence ID" value="NM_138375.3"/>
</dbReference>
<dbReference type="SMR" id="Q8TDN4"/>
<dbReference type="BioGRID" id="124877">
    <property type="interactions" value="48"/>
</dbReference>
<dbReference type="CORUM" id="Q8TDN4"/>
<dbReference type="FunCoup" id="Q8TDN4">
    <property type="interactions" value="749"/>
</dbReference>
<dbReference type="IntAct" id="Q8TDN4">
    <property type="interactions" value="13"/>
</dbReference>
<dbReference type="MINT" id="Q8TDN4"/>
<dbReference type="STRING" id="9606.ENSP00000256925"/>
<dbReference type="GlyGen" id="Q8TDN4">
    <property type="glycosylation" value="2 sites, 8 N-linked glycans (1 site)"/>
</dbReference>
<dbReference type="iPTMnet" id="Q8TDN4"/>
<dbReference type="PhosphoSitePlus" id="Q8TDN4"/>
<dbReference type="SwissPalm" id="Q8TDN4"/>
<dbReference type="BioMuta" id="CABLES1"/>
<dbReference type="DMDM" id="73921298"/>
<dbReference type="CPTAC" id="CPTAC-1741"/>
<dbReference type="CPTAC" id="CPTAC-1742"/>
<dbReference type="jPOST" id="Q8TDN4"/>
<dbReference type="MassIVE" id="Q8TDN4"/>
<dbReference type="PaxDb" id="9606-ENSP00000256925"/>
<dbReference type="PeptideAtlas" id="Q8TDN4"/>
<dbReference type="ProteomicsDB" id="4430"/>
<dbReference type="ProteomicsDB" id="74310">
    <molecule id="Q8TDN4-1"/>
</dbReference>
<dbReference type="ProteomicsDB" id="74311">
    <molecule id="Q8TDN4-2"/>
</dbReference>
<dbReference type="ProteomicsDB" id="74312">
    <molecule id="Q8TDN4-3"/>
</dbReference>
<dbReference type="Pumba" id="Q8TDN4"/>
<dbReference type="Antibodypedia" id="22022">
    <property type="antibodies" value="181 antibodies from 26 providers"/>
</dbReference>
<dbReference type="DNASU" id="91768"/>
<dbReference type="Ensembl" id="ENST00000256925.12">
    <molecule id="Q8TDN4-1"/>
    <property type="protein sequence ID" value="ENSP00000256925.7"/>
    <property type="gene ID" value="ENSG00000134508.13"/>
</dbReference>
<dbReference type="Ensembl" id="ENST00000400473.6">
    <molecule id="Q8TDN4-4"/>
    <property type="protein sequence ID" value="ENSP00000383321.2"/>
    <property type="gene ID" value="ENSG00000134508.13"/>
</dbReference>
<dbReference type="Ensembl" id="ENST00000420687.2">
    <molecule id="Q8TDN4-2"/>
    <property type="protein sequence ID" value="ENSP00000413851.2"/>
    <property type="gene ID" value="ENSG00000134508.13"/>
</dbReference>
<dbReference type="GeneID" id="91768"/>
<dbReference type="KEGG" id="hsa:91768"/>
<dbReference type="MANE-Select" id="ENST00000256925.12">
    <property type="protein sequence ID" value="ENSP00000256925.7"/>
    <property type="RefSeq nucleotide sequence ID" value="NM_001100619.3"/>
    <property type="RefSeq protein sequence ID" value="NP_001094089.1"/>
</dbReference>
<dbReference type="UCSC" id="uc002kuc.3">
    <molecule id="Q8TDN4-1"/>
    <property type="organism name" value="human"/>
</dbReference>
<dbReference type="AGR" id="HGNC:25097"/>
<dbReference type="CTD" id="91768"/>
<dbReference type="DisGeNET" id="91768"/>
<dbReference type="GeneCards" id="CABLES1"/>
<dbReference type="HGNC" id="HGNC:25097">
    <property type="gene designation" value="CABLES1"/>
</dbReference>
<dbReference type="HPA" id="ENSG00000134508">
    <property type="expression patterns" value="Tissue enhanced (brain)"/>
</dbReference>
<dbReference type="MIM" id="609194">
    <property type="type" value="gene"/>
</dbReference>
<dbReference type="neXtProt" id="NX_Q8TDN4"/>
<dbReference type="OpenTargets" id="ENSG00000134508"/>
<dbReference type="PharmGKB" id="PA134880184"/>
<dbReference type="VEuPathDB" id="HostDB:ENSG00000134508"/>
<dbReference type="eggNOG" id="KOG4164">
    <property type="taxonomic scope" value="Eukaryota"/>
</dbReference>
<dbReference type="GeneTree" id="ENSGT00400000022086"/>
<dbReference type="HOGENOM" id="CLU_021942_0_0_1"/>
<dbReference type="InParanoid" id="Q8TDN4"/>
<dbReference type="OMA" id="GEQWQLP"/>
<dbReference type="OrthoDB" id="5353095at2759"/>
<dbReference type="PAN-GO" id="Q8TDN4">
    <property type="GO annotations" value="2 GO annotations based on evolutionary models"/>
</dbReference>
<dbReference type="PhylomeDB" id="Q8TDN4"/>
<dbReference type="TreeFam" id="TF323936"/>
<dbReference type="PathwayCommons" id="Q8TDN4"/>
<dbReference type="Reactome" id="R-HSA-69202">
    <property type="pathway name" value="Cyclin E associated events during G1/S transition"/>
</dbReference>
<dbReference type="Reactome" id="R-HSA-69656">
    <property type="pathway name" value="Cyclin A:Cdk2-associated events at S phase entry"/>
</dbReference>
<dbReference type="Reactome" id="R-HSA-983231">
    <property type="pathway name" value="Factors involved in megakaryocyte development and platelet production"/>
</dbReference>
<dbReference type="SignaLink" id="Q8TDN4"/>
<dbReference type="SIGNOR" id="Q8TDN4"/>
<dbReference type="BioGRID-ORCS" id="91768">
    <property type="hits" value="22 hits in 1166 CRISPR screens"/>
</dbReference>
<dbReference type="ChiTaRS" id="CABLES1">
    <property type="organism name" value="human"/>
</dbReference>
<dbReference type="GeneWiki" id="CABLES1"/>
<dbReference type="GenomeRNAi" id="91768"/>
<dbReference type="Pharos" id="Q8TDN4">
    <property type="development level" value="Tbio"/>
</dbReference>
<dbReference type="PRO" id="PR:Q8TDN4"/>
<dbReference type="Proteomes" id="UP000005640">
    <property type="component" value="Chromosome 18"/>
</dbReference>
<dbReference type="RNAct" id="Q8TDN4">
    <property type="molecule type" value="protein"/>
</dbReference>
<dbReference type="Bgee" id="ENSG00000134508">
    <property type="expression patterns" value="Expressed in putamen and 158 other cell types or tissues"/>
</dbReference>
<dbReference type="ExpressionAtlas" id="Q8TDN4">
    <property type="expression patterns" value="baseline and differential"/>
</dbReference>
<dbReference type="GO" id="GO:0005829">
    <property type="term" value="C:cytosol"/>
    <property type="evidence" value="ECO:0000314"/>
    <property type="project" value="MGI"/>
</dbReference>
<dbReference type="GO" id="GO:0005634">
    <property type="term" value="C:nucleus"/>
    <property type="evidence" value="ECO:0007669"/>
    <property type="project" value="UniProtKB-SubCell"/>
</dbReference>
<dbReference type="GO" id="GO:0051301">
    <property type="term" value="P:cell division"/>
    <property type="evidence" value="ECO:0007669"/>
    <property type="project" value="UniProtKB-KW"/>
</dbReference>
<dbReference type="GO" id="GO:0007399">
    <property type="term" value="P:nervous system development"/>
    <property type="evidence" value="ECO:0000318"/>
    <property type="project" value="GO_Central"/>
</dbReference>
<dbReference type="GO" id="GO:0051726">
    <property type="term" value="P:regulation of cell cycle"/>
    <property type="evidence" value="ECO:0007669"/>
    <property type="project" value="InterPro"/>
</dbReference>
<dbReference type="CDD" id="cd20602">
    <property type="entry name" value="CYCLIN_CABLES1"/>
    <property type="match status" value="1"/>
</dbReference>
<dbReference type="FunFam" id="1.10.472.10:FF:000020">
    <property type="entry name" value="CDK5 and ABL1 enzyme substrate 1"/>
    <property type="match status" value="1"/>
</dbReference>
<dbReference type="Gene3D" id="1.10.472.10">
    <property type="entry name" value="Cyclin-like"/>
    <property type="match status" value="1"/>
</dbReference>
<dbReference type="InterPro" id="IPR012388">
    <property type="entry name" value="CABLES1/2"/>
</dbReference>
<dbReference type="InterPro" id="IPR036915">
    <property type="entry name" value="Cyclin-like_sf"/>
</dbReference>
<dbReference type="InterPro" id="IPR006671">
    <property type="entry name" value="Cyclin_N"/>
</dbReference>
<dbReference type="PANTHER" id="PTHR22896">
    <property type="entry name" value="CDK5 AND ABL1 ENZYME SUBSTRATE 1"/>
    <property type="match status" value="1"/>
</dbReference>
<dbReference type="PANTHER" id="PTHR22896:SF1">
    <property type="entry name" value="CDK5 AND ABL1 ENZYME SUBSTRATE 1"/>
    <property type="match status" value="1"/>
</dbReference>
<dbReference type="Pfam" id="PF00134">
    <property type="entry name" value="Cyclin_N"/>
    <property type="match status" value="1"/>
</dbReference>
<dbReference type="PIRSF" id="PIRSF025798">
    <property type="entry name" value="Cables"/>
    <property type="match status" value="1"/>
</dbReference>
<dbReference type="SUPFAM" id="SSF47954">
    <property type="entry name" value="Cyclin-like"/>
    <property type="match status" value="1"/>
</dbReference>